<comment type="function">
    <text evidence="1">Interacts with the SecY protein in vivo. May bind preferentially to an uncomplexed state of SecY, thus functioning either as a chelating agent for excess SecY in the cell or as a regulatory factor that negatively controls the translocase function.</text>
</comment>
<comment type="subcellular location">
    <subcellularLocation>
        <location evidence="1">Cell inner membrane</location>
        <topology evidence="1">Peripheral membrane protein</topology>
        <orientation evidence="1">Cytoplasmic side</orientation>
    </subcellularLocation>
    <text evidence="1">Loosely associated with the cytoplasmic side of the inner membrane, probably via SecY.</text>
</comment>
<comment type="similarity">
    <text evidence="1">Belongs to the Syd family.</text>
</comment>
<accession>A8H6N2</accession>
<gene>
    <name evidence="1" type="primary">syd</name>
    <name type="ordered locus">Spea_2901</name>
</gene>
<proteinExistence type="inferred from homology"/>
<dbReference type="EMBL" id="CP000851">
    <property type="protein sequence ID" value="ABV88219.1"/>
    <property type="molecule type" value="Genomic_DNA"/>
</dbReference>
<dbReference type="RefSeq" id="WP_012156124.1">
    <property type="nucleotide sequence ID" value="NC_009901.1"/>
</dbReference>
<dbReference type="SMR" id="A8H6N2"/>
<dbReference type="STRING" id="398579.Spea_2901"/>
<dbReference type="KEGG" id="spl:Spea_2901"/>
<dbReference type="eggNOG" id="ENOG502ZCMR">
    <property type="taxonomic scope" value="Bacteria"/>
</dbReference>
<dbReference type="HOGENOM" id="CLU_121866_0_0_6"/>
<dbReference type="OrthoDB" id="5599437at2"/>
<dbReference type="Proteomes" id="UP000002608">
    <property type="component" value="Chromosome"/>
</dbReference>
<dbReference type="GO" id="GO:0009898">
    <property type="term" value="C:cytoplasmic side of plasma membrane"/>
    <property type="evidence" value="ECO:0007669"/>
    <property type="project" value="InterPro"/>
</dbReference>
<dbReference type="CDD" id="cd16323">
    <property type="entry name" value="Syd"/>
    <property type="match status" value="1"/>
</dbReference>
<dbReference type="Gene3D" id="3.40.1580.20">
    <property type="entry name" value="Syd protein"/>
    <property type="match status" value="1"/>
</dbReference>
<dbReference type="HAMAP" id="MF_01104">
    <property type="entry name" value="Syd"/>
    <property type="match status" value="1"/>
</dbReference>
<dbReference type="InterPro" id="IPR009948">
    <property type="entry name" value="Syd"/>
</dbReference>
<dbReference type="InterPro" id="IPR038228">
    <property type="entry name" value="Syd_sf"/>
</dbReference>
<dbReference type="NCBIfam" id="NF003439">
    <property type="entry name" value="PRK04968.1"/>
    <property type="match status" value="1"/>
</dbReference>
<dbReference type="Pfam" id="PF07348">
    <property type="entry name" value="Syd"/>
    <property type="match status" value="1"/>
</dbReference>
<organism>
    <name type="scientific">Shewanella pealeana (strain ATCC 700345 / ANG-SQ1)</name>
    <dbReference type="NCBI Taxonomy" id="398579"/>
    <lineage>
        <taxon>Bacteria</taxon>
        <taxon>Pseudomonadati</taxon>
        <taxon>Pseudomonadota</taxon>
        <taxon>Gammaproteobacteria</taxon>
        <taxon>Alteromonadales</taxon>
        <taxon>Shewanellaceae</taxon>
        <taxon>Shewanella</taxon>
    </lineage>
</organism>
<name>SYDP_SHEPA</name>
<protein>
    <recommendedName>
        <fullName evidence="1">Protein Syd</fullName>
    </recommendedName>
</protein>
<sequence length="213" mass="24497">MSSLPALDLFLSKYQQAYVDQLGEQPRYYAQEQESDCVVGEMDSDGAVFWQGVVRDNPGQFENVESALELTLCPEINTFYGRHFSAPLFFDSKWGSGELIQVWNQTDFEYLQQNIIGHLMMKKKLKQEPTWFIGVLDDEDKMLTVNNADGSVWVEIPGELQSTKLAESLDEFISLLTPRVMPPVKPIEESMPELDHPGIWQRMKLMWNNLRGK</sequence>
<evidence type="ECO:0000255" key="1">
    <source>
        <dbReference type="HAMAP-Rule" id="MF_01104"/>
    </source>
</evidence>
<reference key="1">
    <citation type="submission" date="2007-10" db="EMBL/GenBank/DDBJ databases">
        <title>Complete sequence of Shewanella pealeana ATCC 700345.</title>
        <authorList>
            <consortium name="US DOE Joint Genome Institute"/>
            <person name="Copeland A."/>
            <person name="Lucas S."/>
            <person name="Lapidus A."/>
            <person name="Barry K."/>
            <person name="Glavina del Rio T."/>
            <person name="Dalin E."/>
            <person name="Tice H."/>
            <person name="Pitluck S."/>
            <person name="Chertkov O."/>
            <person name="Brettin T."/>
            <person name="Bruce D."/>
            <person name="Detter J.C."/>
            <person name="Han C."/>
            <person name="Schmutz J."/>
            <person name="Larimer F."/>
            <person name="Land M."/>
            <person name="Hauser L."/>
            <person name="Kyrpides N."/>
            <person name="Kim E."/>
            <person name="Zhao J.-S.Z."/>
            <person name="Manno D."/>
            <person name="Hawari J."/>
            <person name="Richardson P."/>
        </authorList>
    </citation>
    <scope>NUCLEOTIDE SEQUENCE [LARGE SCALE GENOMIC DNA]</scope>
    <source>
        <strain>ATCC 700345 / ANG-SQ1</strain>
    </source>
</reference>
<keyword id="KW-0997">Cell inner membrane</keyword>
<keyword id="KW-1003">Cell membrane</keyword>
<keyword id="KW-0472">Membrane</keyword>
<keyword id="KW-1185">Reference proteome</keyword>
<feature type="chain" id="PRO_1000084806" description="Protein Syd">
    <location>
        <begin position="1"/>
        <end position="213"/>
    </location>
</feature>